<organism>
    <name type="scientific">Photorhabdus laumondii subsp. laumondii (strain DSM 15139 / CIP 105565 / TT01)</name>
    <name type="common">Photorhabdus luminescens subsp. laumondii</name>
    <dbReference type="NCBI Taxonomy" id="243265"/>
    <lineage>
        <taxon>Bacteria</taxon>
        <taxon>Pseudomonadati</taxon>
        <taxon>Pseudomonadota</taxon>
        <taxon>Gammaproteobacteria</taxon>
        <taxon>Enterobacterales</taxon>
        <taxon>Morganellaceae</taxon>
        <taxon>Photorhabdus</taxon>
    </lineage>
</organism>
<dbReference type="EMBL" id="BX571871">
    <property type="protein sequence ID" value="CAE15970.1"/>
    <property type="molecule type" value="Genomic_DNA"/>
</dbReference>
<dbReference type="RefSeq" id="WP_011147764.1">
    <property type="nucleotide sequence ID" value="NC_005126.1"/>
</dbReference>
<dbReference type="SMR" id="Q7N198"/>
<dbReference type="STRING" id="243265.plu3597"/>
<dbReference type="GeneID" id="48849843"/>
<dbReference type="KEGG" id="plu:plu3597"/>
<dbReference type="eggNOG" id="COG0509">
    <property type="taxonomic scope" value="Bacteria"/>
</dbReference>
<dbReference type="HOGENOM" id="CLU_097408_2_1_6"/>
<dbReference type="OrthoDB" id="9796712at2"/>
<dbReference type="Proteomes" id="UP000002514">
    <property type="component" value="Chromosome"/>
</dbReference>
<dbReference type="GO" id="GO:0005829">
    <property type="term" value="C:cytosol"/>
    <property type="evidence" value="ECO:0007669"/>
    <property type="project" value="TreeGrafter"/>
</dbReference>
<dbReference type="GO" id="GO:0005960">
    <property type="term" value="C:glycine cleavage complex"/>
    <property type="evidence" value="ECO:0007669"/>
    <property type="project" value="InterPro"/>
</dbReference>
<dbReference type="GO" id="GO:0019464">
    <property type="term" value="P:glycine decarboxylation via glycine cleavage system"/>
    <property type="evidence" value="ECO:0007669"/>
    <property type="project" value="UniProtKB-UniRule"/>
</dbReference>
<dbReference type="CDD" id="cd06848">
    <property type="entry name" value="GCS_H"/>
    <property type="match status" value="1"/>
</dbReference>
<dbReference type="FunFam" id="2.40.50.100:FF:000011">
    <property type="entry name" value="Glycine cleavage system H protein"/>
    <property type="match status" value="1"/>
</dbReference>
<dbReference type="Gene3D" id="2.40.50.100">
    <property type="match status" value="1"/>
</dbReference>
<dbReference type="HAMAP" id="MF_00272">
    <property type="entry name" value="GcvH"/>
    <property type="match status" value="1"/>
</dbReference>
<dbReference type="InterPro" id="IPR003016">
    <property type="entry name" value="2-oxoA_DH_lipoyl-BS"/>
</dbReference>
<dbReference type="InterPro" id="IPR000089">
    <property type="entry name" value="Biotin_lipoyl"/>
</dbReference>
<dbReference type="InterPro" id="IPR002930">
    <property type="entry name" value="GCV_H"/>
</dbReference>
<dbReference type="InterPro" id="IPR033753">
    <property type="entry name" value="GCV_H/Fam206"/>
</dbReference>
<dbReference type="InterPro" id="IPR017453">
    <property type="entry name" value="GCV_H_sub"/>
</dbReference>
<dbReference type="InterPro" id="IPR011053">
    <property type="entry name" value="Single_hybrid_motif"/>
</dbReference>
<dbReference type="NCBIfam" id="TIGR00527">
    <property type="entry name" value="gcvH"/>
    <property type="match status" value="1"/>
</dbReference>
<dbReference type="NCBIfam" id="NF002270">
    <property type="entry name" value="PRK01202.1"/>
    <property type="match status" value="1"/>
</dbReference>
<dbReference type="PANTHER" id="PTHR11715">
    <property type="entry name" value="GLYCINE CLEAVAGE SYSTEM H PROTEIN"/>
    <property type="match status" value="1"/>
</dbReference>
<dbReference type="PANTHER" id="PTHR11715:SF3">
    <property type="entry name" value="GLYCINE CLEAVAGE SYSTEM H PROTEIN-RELATED"/>
    <property type="match status" value="1"/>
</dbReference>
<dbReference type="Pfam" id="PF01597">
    <property type="entry name" value="GCV_H"/>
    <property type="match status" value="1"/>
</dbReference>
<dbReference type="SUPFAM" id="SSF51230">
    <property type="entry name" value="Single hybrid motif"/>
    <property type="match status" value="1"/>
</dbReference>
<dbReference type="PROSITE" id="PS50968">
    <property type="entry name" value="BIOTINYL_LIPOYL"/>
    <property type="match status" value="1"/>
</dbReference>
<dbReference type="PROSITE" id="PS00189">
    <property type="entry name" value="LIPOYL"/>
    <property type="match status" value="1"/>
</dbReference>
<gene>
    <name evidence="1" type="primary">gcvH</name>
    <name type="ordered locus">plu3597</name>
</gene>
<keyword id="KW-0450">Lipoyl</keyword>
<keyword id="KW-1185">Reference proteome</keyword>
<accession>Q7N198</accession>
<name>GCSH_PHOLL</name>
<feature type="chain" id="PRO_0000302407" description="Glycine cleavage system H protein">
    <location>
        <begin position="1"/>
        <end position="130"/>
    </location>
</feature>
<feature type="domain" description="Lipoyl-binding" evidence="2">
    <location>
        <begin position="24"/>
        <end position="106"/>
    </location>
</feature>
<feature type="modified residue" description="N6-lipoyllysine" evidence="1">
    <location>
        <position position="65"/>
    </location>
</feature>
<reference key="1">
    <citation type="journal article" date="2003" name="Nat. Biotechnol.">
        <title>The genome sequence of the entomopathogenic bacterium Photorhabdus luminescens.</title>
        <authorList>
            <person name="Duchaud E."/>
            <person name="Rusniok C."/>
            <person name="Frangeul L."/>
            <person name="Buchrieser C."/>
            <person name="Givaudan A."/>
            <person name="Taourit S."/>
            <person name="Bocs S."/>
            <person name="Boursaux-Eude C."/>
            <person name="Chandler M."/>
            <person name="Charles J.-F."/>
            <person name="Dassa E."/>
            <person name="Derose R."/>
            <person name="Derzelle S."/>
            <person name="Freyssinet G."/>
            <person name="Gaudriault S."/>
            <person name="Medigue C."/>
            <person name="Lanois A."/>
            <person name="Powell K."/>
            <person name="Siguier P."/>
            <person name="Vincent R."/>
            <person name="Wingate V."/>
            <person name="Zouine M."/>
            <person name="Glaser P."/>
            <person name="Boemare N."/>
            <person name="Danchin A."/>
            <person name="Kunst F."/>
        </authorList>
    </citation>
    <scope>NUCLEOTIDE SEQUENCE [LARGE SCALE GENOMIC DNA]</scope>
    <source>
        <strain>DSM 15139 / CIP 105565 / TT01</strain>
    </source>
</reference>
<sequence>MSNVPAELKYVESHEWVRAEGNDEYTVGITEHAQELLGDMVFVDLPEVGDQINLGDDCAVVESVKAASDIYAPLSGKIIAVNDALNDAPELVNSEPYHEGWLFRIKASDKSELSSLLNAEGYQALLDEEE</sequence>
<evidence type="ECO:0000255" key="1">
    <source>
        <dbReference type="HAMAP-Rule" id="MF_00272"/>
    </source>
</evidence>
<evidence type="ECO:0000255" key="2">
    <source>
        <dbReference type="PROSITE-ProRule" id="PRU01066"/>
    </source>
</evidence>
<comment type="function">
    <text evidence="1">The glycine cleavage system catalyzes the degradation of glycine. The H protein shuttles the methylamine group of glycine from the P protein to the T protein.</text>
</comment>
<comment type="cofactor">
    <cofactor evidence="1">
        <name>(R)-lipoate</name>
        <dbReference type="ChEBI" id="CHEBI:83088"/>
    </cofactor>
    <text evidence="1">Binds 1 lipoyl cofactor covalently.</text>
</comment>
<comment type="subunit">
    <text evidence="1">The glycine cleavage system is composed of four proteins: P, T, L and H.</text>
</comment>
<comment type="similarity">
    <text evidence="1">Belongs to the GcvH family.</text>
</comment>
<protein>
    <recommendedName>
        <fullName evidence="1">Glycine cleavage system H protein</fullName>
    </recommendedName>
</protein>
<proteinExistence type="inferred from homology"/>